<gene>
    <name evidence="1" type="primary">xylA</name>
    <name type="ordered locus">BamMC406_6032</name>
</gene>
<proteinExistence type="inferred from homology"/>
<protein>
    <recommendedName>
        <fullName evidence="1">Xylose isomerase</fullName>
        <ecNumber evidence="1">5.3.1.5</ecNumber>
    </recommendedName>
</protein>
<name>XYLA_BURA4</name>
<accession>B1Z405</accession>
<feature type="chain" id="PRO_1000200281" description="Xylose isomerase">
    <location>
        <begin position="1"/>
        <end position="440"/>
    </location>
</feature>
<feature type="active site" evidence="1">
    <location>
        <position position="100"/>
    </location>
</feature>
<feature type="active site" evidence="1">
    <location>
        <position position="103"/>
    </location>
</feature>
<feature type="binding site" evidence="1">
    <location>
        <position position="231"/>
    </location>
    <ligand>
        <name>Mg(2+)</name>
        <dbReference type="ChEBI" id="CHEBI:18420"/>
        <label>1</label>
    </ligand>
</feature>
<feature type="binding site" evidence="1">
    <location>
        <position position="267"/>
    </location>
    <ligand>
        <name>Mg(2+)</name>
        <dbReference type="ChEBI" id="CHEBI:18420"/>
        <label>1</label>
    </ligand>
</feature>
<feature type="binding site" evidence="1">
    <location>
        <position position="267"/>
    </location>
    <ligand>
        <name>Mg(2+)</name>
        <dbReference type="ChEBI" id="CHEBI:18420"/>
        <label>2</label>
    </ligand>
</feature>
<feature type="binding site" evidence="1">
    <location>
        <position position="270"/>
    </location>
    <ligand>
        <name>Mg(2+)</name>
        <dbReference type="ChEBI" id="CHEBI:18420"/>
        <label>2</label>
    </ligand>
</feature>
<feature type="binding site" evidence="1">
    <location>
        <position position="295"/>
    </location>
    <ligand>
        <name>Mg(2+)</name>
        <dbReference type="ChEBI" id="CHEBI:18420"/>
        <label>1</label>
    </ligand>
</feature>
<feature type="binding site" evidence="1">
    <location>
        <position position="306"/>
    </location>
    <ligand>
        <name>Mg(2+)</name>
        <dbReference type="ChEBI" id="CHEBI:18420"/>
        <label>2</label>
    </ligand>
</feature>
<feature type="binding site" evidence="1">
    <location>
        <position position="308"/>
    </location>
    <ligand>
        <name>Mg(2+)</name>
        <dbReference type="ChEBI" id="CHEBI:18420"/>
        <label>2</label>
    </ligand>
</feature>
<feature type="binding site" evidence="1">
    <location>
        <position position="338"/>
    </location>
    <ligand>
        <name>Mg(2+)</name>
        <dbReference type="ChEBI" id="CHEBI:18420"/>
        <label>1</label>
    </ligand>
</feature>
<dbReference type="EC" id="5.3.1.5" evidence="1"/>
<dbReference type="EMBL" id="CP001027">
    <property type="protein sequence ID" value="ACB68468.1"/>
    <property type="molecule type" value="Genomic_DNA"/>
</dbReference>
<dbReference type="RefSeq" id="WP_012372371.1">
    <property type="nucleotide sequence ID" value="NC_010557.1"/>
</dbReference>
<dbReference type="SMR" id="B1Z405"/>
<dbReference type="KEGG" id="bac:BamMC406_6032"/>
<dbReference type="HOGENOM" id="CLU_037261_1_0_4"/>
<dbReference type="OrthoDB" id="9763981at2"/>
<dbReference type="Proteomes" id="UP000001680">
    <property type="component" value="Chromosome 3"/>
</dbReference>
<dbReference type="GO" id="GO:0005737">
    <property type="term" value="C:cytoplasm"/>
    <property type="evidence" value="ECO:0007669"/>
    <property type="project" value="UniProtKB-SubCell"/>
</dbReference>
<dbReference type="GO" id="GO:0000287">
    <property type="term" value="F:magnesium ion binding"/>
    <property type="evidence" value="ECO:0007669"/>
    <property type="project" value="UniProtKB-UniRule"/>
</dbReference>
<dbReference type="GO" id="GO:0009045">
    <property type="term" value="F:xylose isomerase activity"/>
    <property type="evidence" value="ECO:0007669"/>
    <property type="project" value="UniProtKB-UniRule"/>
</dbReference>
<dbReference type="GO" id="GO:0042732">
    <property type="term" value="P:D-xylose metabolic process"/>
    <property type="evidence" value="ECO:0007669"/>
    <property type="project" value="UniProtKB-UniRule"/>
</dbReference>
<dbReference type="FunFam" id="3.20.20.150:FF:000002">
    <property type="entry name" value="Xylose isomerase"/>
    <property type="match status" value="1"/>
</dbReference>
<dbReference type="Gene3D" id="3.20.20.150">
    <property type="entry name" value="Divalent-metal-dependent TIM barrel enzymes"/>
    <property type="match status" value="1"/>
</dbReference>
<dbReference type="HAMAP" id="MF_00455">
    <property type="entry name" value="Xylose_isom_A"/>
    <property type="match status" value="1"/>
</dbReference>
<dbReference type="InterPro" id="IPR036237">
    <property type="entry name" value="Xyl_isomerase-like_sf"/>
</dbReference>
<dbReference type="InterPro" id="IPR013452">
    <property type="entry name" value="Xylose_isom_bac"/>
</dbReference>
<dbReference type="InterPro" id="IPR001998">
    <property type="entry name" value="Xylose_isomerase"/>
</dbReference>
<dbReference type="NCBIfam" id="NF003998">
    <property type="entry name" value="PRK05474.1"/>
    <property type="match status" value="1"/>
</dbReference>
<dbReference type="NCBIfam" id="TIGR02630">
    <property type="entry name" value="xylose_isom_A"/>
    <property type="match status" value="1"/>
</dbReference>
<dbReference type="PANTHER" id="PTHR48408">
    <property type="match status" value="1"/>
</dbReference>
<dbReference type="PANTHER" id="PTHR48408:SF1">
    <property type="entry name" value="XYLOSE ISOMERASE"/>
    <property type="match status" value="1"/>
</dbReference>
<dbReference type="PRINTS" id="PR00688">
    <property type="entry name" value="XYLOSISMRASE"/>
</dbReference>
<dbReference type="SUPFAM" id="SSF51658">
    <property type="entry name" value="Xylose isomerase-like"/>
    <property type="match status" value="1"/>
</dbReference>
<dbReference type="PROSITE" id="PS51415">
    <property type="entry name" value="XYLOSE_ISOMERASE"/>
    <property type="match status" value="1"/>
</dbReference>
<keyword id="KW-0119">Carbohydrate metabolism</keyword>
<keyword id="KW-0963">Cytoplasm</keyword>
<keyword id="KW-0413">Isomerase</keyword>
<keyword id="KW-0460">Magnesium</keyword>
<keyword id="KW-0479">Metal-binding</keyword>
<keyword id="KW-0859">Xylose metabolism</keyword>
<sequence length="440" mass="49497">MSYFEHIPAIRYEGPQSDNPLAYHHYDAEKRVLGKTLAEHLRIAVCYWHTFVWPGHDIFGQGAFQRPWQQPGDALERARLKADAAFEFFTKLGTPFYTFHDTDVAPEGDSLREYAANFARMVDYLGERQQASGVRLLWGTANLFSHPRFAAGAATNPNPDVFAWAAAQVCHALDATHRLGGENYVLWGGREGYETLLNTDLKRERDQFARFLSMVVEHKHRIGFKGALLIEPKPQEPTKHQYDYDVATVHGFLVQYGLQNEIRVNIEANHATLAGHSFHHEIANAFALGVFGSVDANRGDPQNGWDTDQFPNSVEELTLAFYEILRHGGFTTGGMNFDAKVRRQSVDPEDLFYGHVGAIDVLALALERAAVLVENDRLDALRRQRYAQWDDAFGQKILSGGYTLQSLAEDALARGVDPRHASGAQERLENIVNQAIYGLR</sequence>
<reference key="1">
    <citation type="submission" date="2008-04" db="EMBL/GenBank/DDBJ databases">
        <title>Complete sequence of chromosome 3 of Burkholderia ambifaria MC40-6.</title>
        <authorList>
            <person name="Copeland A."/>
            <person name="Lucas S."/>
            <person name="Lapidus A."/>
            <person name="Glavina del Rio T."/>
            <person name="Dalin E."/>
            <person name="Tice H."/>
            <person name="Pitluck S."/>
            <person name="Chain P."/>
            <person name="Malfatti S."/>
            <person name="Shin M."/>
            <person name="Vergez L."/>
            <person name="Lang D."/>
            <person name="Schmutz J."/>
            <person name="Larimer F."/>
            <person name="Land M."/>
            <person name="Hauser L."/>
            <person name="Kyrpides N."/>
            <person name="Lykidis A."/>
            <person name="Ramette A."/>
            <person name="Konstantinidis K."/>
            <person name="Tiedje J."/>
            <person name="Richardson P."/>
        </authorList>
    </citation>
    <scope>NUCLEOTIDE SEQUENCE [LARGE SCALE GENOMIC DNA]</scope>
    <source>
        <strain>MC40-6</strain>
    </source>
</reference>
<comment type="catalytic activity">
    <reaction evidence="1">
        <text>alpha-D-xylose = alpha-D-xylulofuranose</text>
        <dbReference type="Rhea" id="RHEA:22816"/>
        <dbReference type="ChEBI" id="CHEBI:28518"/>
        <dbReference type="ChEBI" id="CHEBI:188998"/>
        <dbReference type="EC" id="5.3.1.5"/>
    </reaction>
</comment>
<comment type="cofactor">
    <cofactor evidence="1">
        <name>Mg(2+)</name>
        <dbReference type="ChEBI" id="CHEBI:18420"/>
    </cofactor>
    <text evidence="1">Binds 2 magnesium ions per subunit.</text>
</comment>
<comment type="subunit">
    <text evidence="1">Homotetramer.</text>
</comment>
<comment type="subcellular location">
    <subcellularLocation>
        <location evidence="1">Cytoplasm</location>
    </subcellularLocation>
</comment>
<comment type="similarity">
    <text evidence="1">Belongs to the xylose isomerase family.</text>
</comment>
<evidence type="ECO:0000255" key="1">
    <source>
        <dbReference type="HAMAP-Rule" id="MF_00455"/>
    </source>
</evidence>
<organism>
    <name type="scientific">Burkholderia ambifaria (strain MC40-6)</name>
    <dbReference type="NCBI Taxonomy" id="398577"/>
    <lineage>
        <taxon>Bacteria</taxon>
        <taxon>Pseudomonadati</taxon>
        <taxon>Pseudomonadota</taxon>
        <taxon>Betaproteobacteria</taxon>
        <taxon>Burkholderiales</taxon>
        <taxon>Burkholderiaceae</taxon>
        <taxon>Burkholderia</taxon>
        <taxon>Burkholderia cepacia complex</taxon>
    </lineage>
</organism>